<gene>
    <name evidence="1" type="primary">hisZ</name>
    <name type="ordered locus">CLJ_B1672</name>
</gene>
<dbReference type="EMBL" id="CP001083">
    <property type="protein sequence ID" value="ACQ52482.1"/>
    <property type="molecule type" value="Genomic_DNA"/>
</dbReference>
<dbReference type="RefSeq" id="WP_012720670.1">
    <property type="nucleotide sequence ID" value="NC_012658.1"/>
</dbReference>
<dbReference type="SMR" id="C3KVW9"/>
<dbReference type="KEGG" id="cbi:CLJ_B1672"/>
<dbReference type="HOGENOM" id="CLU_025113_0_0_9"/>
<dbReference type="UniPathway" id="UPA00031">
    <property type="reaction ID" value="UER00006"/>
</dbReference>
<dbReference type="Proteomes" id="UP000002333">
    <property type="component" value="Chromosome"/>
</dbReference>
<dbReference type="GO" id="GO:0005737">
    <property type="term" value="C:cytoplasm"/>
    <property type="evidence" value="ECO:0007669"/>
    <property type="project" value="UniProtKB-SubCell"/>
</dbReference>
<dbReference type="GO" id="GO:0140096">
    <property type="term" value="F:catalytic activity, acting on a protein"/>
    <property type="evidence" value="ECO:0007669"/>
    <property type="project" value="UniProtKB-ARBA"/>
</dbReference>
<dbReference type="GO" id="GO:0004821">
    <property type="term" value="F:histidine-tRNA ligase activity"/>
    <property type="evidence" value="ECO:0007669"/>
    <property type="project" value="TreeGrafter"/>
</dbReference>
<dbReference type="GO" id="GO:0016740">
    <property type="term" value="F:transferase activity"/>
    <property type="evidence" value="ECO:0007669"/>
    <property type="project" value="UniProtKB-ARBA"/>
</dbReference>
<dbReference type="GO" id="GO:0006427">
    <property type="term" value="P:histidyl-tRNA aminoacylation"/>
    <property type="evidence" value="ECO:0007669"/>
    <property type="project" value="TreeGrafter"/>
</dbReference>
<dbReference type="GO" id="GO:0000105">
    <property type="term" value="P:L-histidine biosynthetic process"/>
    <property type="evidence" value="ECO:0007669"/>
    <property type="project" value="UniProtKB-UniRule"/>
</dbReference>
<dbReference type="CDD" id="cd00773">
    <property type="entry name" value="HisRS-like_core"/>
    <property type="match status" value="1"/>
</dbReference>
<dbReference type="FunFam" id="3.30.930.10:FF:000175">
    <property type="entry name" value="ATP phosphoribosyltransferase regulatory subunit"/>
    <property type="match status" value="1"/>
</dbReference>
<dbReference type="Gene3D" id="3.30.930.10">
    <property type="entry name" value="Bira Bifunctional Protein, Domain 2"/>
    <property type="match status" value="1"/>
</dbReference>
<dbReference type="HAMAP" id="MF_00125">
    <property type="entry name" value="HisZ"/>
    <property type="match status" value="1"/>
</dbReference>
<dbReference type="InterPro" id="IPR006195">
    <property type="entry name" value="aa-tRNA-synth_II"/>
</dbReference>
<dbReference type="InterPro" id="IPR045864">
    <property type="entry name" value="aa-tRNA-synth_II/BPL/LPL"/>
</dbReference>
<dbReference type="InterPro" id="IPR041715">
    <property type="entry name" value="HisRS-like_core"/>
</dbReference>
<dbReference type="InterPro" id="IPR004516">
    <property type="entry name" value="HisRS/HisZ"/>
</dbReference>
<dbReference type="InterPro" id="IPR004517">
    <property type="entry name" value="HisZ"/>
</dbReference>
<dbReference type="NCBIfam" id="TIGR00443">
    <property type="entry name" value="hisZ_biosyn_reg"/>
    <property type="match status" value="1"/>
</dbReference>
<dbReference type="NCBIfam" id="NF008936">
    <property type="entry name" value="PRK12292.1-3"/>
    <property type="match status" value="1"/>
</dbReference>
<dbReference type="PANTHER" id="PTHR43707:SF6">
    <property type="entry name" value="ATP PHOSPHORIBOSYLTRANSFERASE REGULATORY SUBUNIT"/>
    <property type="match status" value="1"/>
</dbReference>
<dbReference type="PANTHER" id="PTHR43707">
    <property type="entry name" value="HISTIDYL-TRNA SYNTHETASE"/>
    <property type="match status" value="1"/>
</dbReference>
<dbReference type="Pfam" id="PF13393">
    <property type="entry name" value="tRNA-synt_His"/>
    <property type="match status" value="1"/>
</dbReference>
<dbReference type="PIRSF" id="PIRSF001549">
    <property type="entry name" value="His-tRNA_synth"/>
    <property type="match status" value="1"/>
</dbReference>
<dbReference type="SUPFAM" id="SSF55681">
    <property type="entry name" value="Class II aaRS and biotin synthetases"/>
    <property type="match status" value="1"/>
</dbReference>
<dbReference type="PROSITE" id="PS50862">
    <property type="entry name" value="AA_TRNA_LIGASE_II"/>
    <property type="match status" value="1"/>
</dbReference>
<protein>
    <recommendedName>
        <fullName evidence="1">ATP phosphoribosyltransferase regulatory subunit</fullName>
    </recommendedName>
</protein>
<evidence type="ECO:0000255" key="1">
    <source>
        <dbReference type="HAMAP-Rule" id="MF_00125"/>
    </source>
</evidence>
<reference key="1">
    <citation type="submission" date="2008-05" db="EMBL/GenBank/DDBJ databases">
        <title>Genome sequence of Clostridium botulinum Ba4 strain 657.</title>
        <authorList>
            <person name="Shrivastava S."/>
            <person name="Brown J.L."/>
            <person name="Bruce D."/>
            <person name="Detter C."/>
            <person name="Munk C."/>
            <person name="Smith L.A."/>
            <person name="Smith T.J."/>
            <person name="Sutton G."/>
            <person name="Brettin T.S."/>
        </authorList>
    </citation>
    <scope>NUCLEOTIDE SEQUENCE [LARGE SCALE GENOMIC DNA]</scope>
    <source>
        <strain>657 / Type Ba4</strain>
    </source>
</reference>
<organism>
    <name type="scientific">Clostridium botulinum (strain 657 / Type Ba4)</name>
    <dbReference type="NCBI Taxonomy" id="515621"/>
    <lineage>
        <taxon>Bacteria</taxon>
        <taxon>Bacillati</taxon>
        <taxon>Bacillota</taxon>
        <taxon>Clostridia</taxon>
        <taxon>Eubacteriales</taxon>
        <taxon>Clostridiaceae</taxon>
        <taxon>Clostridium</taxon>
    </lineage>
</organism>
<sequence>MGNWNKYIPKGMKDILFEESNIKLDIEDQLRKIYKYSGFSEIISPTIEFYDVFNSNIQAIPQEKMYKLFDNLGRILVLRPDMTTPIGRITGTKMKDCTYPLKLCYTANIFRVNEKLNGKRGEITQSGIEIIGTKGIKSDVDSIVTAINALLSLGLRNFKIELGEAGLFEALTENMRIEEENLKKLKEIIRNKNYVALKKFLDEISLKYSKEDFEIIENLPKLFGDIEIIEKAKALTKNEKALKSLNDIYNIYKSIEDIGLGSYISIDLGMVQNIDYYTGVIFKGYVEEVGDSILSGGRYDNLIQHFGIELPATGFAINVDDIMIALKKQNTMSMDKDKKVLIFYKEEFLRKAYDFMQELKMKKIICELSLLDEDKEILLYSKKKGIDFIIGFTREEKLFVKDLKSDKIAFLEKNEIEDLLMV</sequence>
<name>HISZ_CLOB6</name>
<comment type="function">
    <text evidence="1">Required for the first step of histidine biosynthesis. May allow the feedback regulation of ATP phosphoribosyltransferase activity by histidine.</text>
</comment>
<comment type="pathway">
    <text evidence="1">Amino-acid biosynthesis; L-histidine biosynthesis; L-histidine from 5-phospho-alpha-D-ribose 1-diphosphate: step 1/9.</text>
</comment>
<comment type="subunit">
    <text evidence="1">Heteromultimer composed of HisG and HisZ subunits.</text>
</comment>
<comment type="subcellular location">
    <subcellularLocation>
        <location evidence="1">Cytoplasm</location>
    </subcellularLocation>
</comment>
<comment type="miscellaneous">
    <text>This function is generally fulfilled by the C-terminal part of HisG, which is missing in some bacteria such as this one.</text>
</comment>
<comment type="similarity">
    <text evidence="1">Belongs to the class-II aminoacyl-tRNA synthetase family. HisZ subfamily.</text>
</comment>
<accession>C3KVW9</accession>
<proteinExistence type="inferred from homology"/>
<keyword id="KW-0028">Amino-acid biosynthesis</keyword>
<keyword id="KW-0963">Cytoplasm</keyword>
<keyword id="KW-0368">Histidine biosynthesis</keyword>
<feature type="chain" id="PRO_1000203113" description="ATP phosphoribosyltransferase regulatory subunit">
    <location>
        <begin position="1"/>
        <end position="422"/>
    </location>
</feature>